<organism>
    <name type="scientific">Burkholderia pseudomallei (strain 1710b)</name>
    <dbReference type="NCBI Taxonomy" id="320372"/>
    <lineage>
        <taxon>Bacteria</taxon>
        <taxon>Pseudomonadati</taxon>
        <taxon>Pseudomonadota</taxon>
        <taxon>Betaproteobacteria</taxon>
        <taxon>Burkholderiales</taxon>
        <taxon>Burkholderiaceae</taxon>
        <taxon>Burkholderia</taxon>
        <taxon>pseudomallei group</taxon>
    </lineage>
</organism>
<name>RS17_BURP1</name>
<feature type="chain" id="PRO_0000233447" description="Small ribosomal subunit protein uS17">
    <location>
        <begin position="1"/>
        <end position="90"/>
    </location>
</feature>
<sequence>MNDSVKTSLKRTLVGKVVSNKMDKTVTVLVEHRVKHPIYGKYVVRSKKYHAHDEANTYNEGDLVEIQETRPVSKTKAWAVSRLVEAARVI</sequence>
<gene>
    <name evidence="1" type="primary">rpsQ</name>
    <name type="ordered locus">BURPS1710b_3767</name>
</gene>
<keyword id="KW-0687">Ribonucleoprotein</keyword>
<keyword id="KW-0689">Ribosomal protein</keyword>
<keyword id="KW-0694">RNA-binding</keyword>
<keyword id="KW-0699">rRNA-binding</keyword>
<comment type="function">
    <text evidence="1">One of the primary rRNA binding proteins, it binds specifically to the 5'-end of 16S ribosomal RNA.</text>
</comment>
<comment type="subunit">
    <text evidence="1">Part of the 30S ribosomal subunit.</text>
</comment>
<comment type="similarity">
    <text evidence="1">Belongs to the universal ribosomal protein uS17 family.</text>
</comment>
<protein>
    <recommendedName>
        <fullName evidence="1">Small ribosomal subunit protein uS17</fullName>
    </recommendedName>
    <alternativeName>
        <fullName evidence="2">30S ribosomal protein S17</fullName>
    </alternativeName>
</protein>
<accession>Q3JMS2</accession>
<reference key="1">
    <citation type="journal article" date="2010" name="Genome Biol. Evol.">
        <title>Continuing evolution of Burkholderia mallei through genome reduction and large-scale rearrangements.</title>
        <authorList>
            <person name="Losada L."/>
            <person name="Ronning C.M."/>
            <person name="DeShazer D."/>
            <person name="Woods D."/>
            <person name="Fedorova N."/>
            <person name="Kim H.S."/>
            <person name="Shabalina S.A."/>
            <person name="Pearson T.R."/>
            <person name="Brinkac L."/>
            <person name="Tan P."/>
            <person name="Nandi T."/>
            <person name="Crabtree J."/>
            <person name="Badger J."/>
            <person name="Beckstrom-Sternberg S."/>
            <person name="Saqib M."/>
            <person name="Schutzer S.E."/>
            <person name="Keim P."/>
            <person name="Nierman W.C."/>
        </authorList>
    </citation>
    <scope>NUCLEOTIDE SEQUENCE [LARGE SCALE GENOMIC DNA]</scope>
    <source>
        <strain>1710b</strain>
    </source>
</reference>
<proteinExistence type="inferred from homology"/>
<evidence type="ECO:0000255" key="1">
    <source>
        <dbReference type="HAMAP-Rule" id="MF_01345"/>
    </source>
</evidence>
<evidence type="ECO:0000305" key="2"/>
<dbReference type="EMBL" id="CP000124">
    <property type="protein sequence ID" value="ABA49342.1"/>
    <property type="molecule type" value="Genomic_DNA"/>
</dbReference>
<dbReference type="RefSeq" id="WP_004201274.1">
    <property type="nucleotide sequence ID" value="NC_007434.1"/>
</dbReference>
<dbReference type="SMR" id="Q3JMS2"/>
<dbReference type="EnsemblBacteria" id="ABA49342">
    <property type="protein sequence ID" value="ABA49342"/>
    <property type="gene ID" value="BURPS1710b_3767"/>
</dbReference>
<dbReference type="GeneID" id="93061823"/>
<dbReference type="KEGG" id="bpm:BURPS1710b_3767"/>
<dbReference type="HOGENOM" id="CLU_073626_1_1_4"/>
<dbReference type="Proteomes" id="UP000002700">
    <property type="component" value="Chromosome I"/>
</dbReference>
<dbReference type="GO" id="GO:0022627">
    <property type="term" value="C:cytosolic small ribosomal subunit"/>
    <property type="evidence" value="ECO:0007669"/>
    <property type="project" value="TreeGrafter"/>
</dbReference>
<dbReference type="GO" id="GO:0019843">
    <property type="term" value="F:rRNA binding"/>
    <property type="evidence" value="ECO:0007669"/>
    <property type="project" value="UniProtKB-UniRule"/>
</dbReference>
<dbReference type="GO" id="GO:0003735">
    <property type="term" value="F:structural constituent of ribosome"/>
    <property type="evidence" value="ECO:0007669"/>
    <property type="project" value="InterPro"/>
</dbReference>
<dbReference type="GO" id="GO:0006412">
    <property type="term" value="P:translation"/>
    <property type="evidence" value="ECO:0007669"/>
    <property type="project" value="UniProtKB-UniRule"/>
</dbReference>
<dbReference type="CDD" id="cd00364">
    <property type="entry name" value="Ribosomal_uS17"/>
    <property type="match status" value="1"/>
</dbReference>
<dbReference type="Gene3D" id="2.40.50.140">
    <property type="entry name" value="Nucleic acid-binding proteins"/>
    <property type="match status" value="1"/>
</dbReference>
<dbReference type="HAMAP" id="MF_01345_B">
    <property type="entry name" value="Ribosomal_uS17_B"/>
    <property type="match status" value="1"/>
</dbReference>
<dbReference type="InterPro" id="IPR012340">
    <property type="entry name" value="NA-bd_OB-fold"/>
</dbReference>
<dbReference type="InterPro" id="IPR000266">
    <property type="entry name" value="Ribosomal_uS17"/>
</dbReference>
<dbReference type="InterPro" id="IPR019984">
    <property type="entry name" value="Ribosomal_uS17_bact/chlr"/>
</dbReference>
<dbReference type="InterPro" id="IPR019979">
    <property type="entry name" value="Ribosomal_uS17_CS"/>
</dbReference>
<dbReference type="NCBIfam" id="NF004123">
    <property type="entry name" value="PRK05610.1"/>
    <property type="match status" value="1"/>
</dbReference>
<dbReference type="NCBIfam" id="TIGR03635">
    <property type="entry name" value="uS17_bact"/>
    <property type="match status" value="1"/>
</dbReference>
<dbReference type="PANTHER" id="PTHR10744">
    <property type="entry name" value="40S RIBOSOMAL PROTEIN S11 FAMILY MEMBER"/>
    <property type="match status" value="1"/>
</dbReference>
<dbReference type="PANTHER" id="PTHR10744:SF1">
    <property type="entry name" value="SMALL RIBOSOMAL SUBUNIT PROTEIN US17M"/>
    <property type="match status" value="1"/>
</dbReference>
<dbReference type="Pfam" id="PF00366">
    <property type="entry name" value="Ribosomal_S17"/>
    <property type="match status" value="1"/>
</dbReference>
<dbReference type="PRINTS" id="PR00973">
    <property type="entry name" value="RIBOSOMALS17"/>
</dbReference>
<dbReference type="SUPFAM" id="SSF50249">
    <property type="entry name" value="Nucleic acid-binding proteins"/>
    <property type="match status" value="1"/>
</dbReference>
<dbReference type="PROSITE" id="PS00056">
    <property type="entry name" value="RIBOSOMAL_S17"/>
    <property type="match status" value="1"/>
</dbReference>